<feature type="chain" id="PRO_0000405204" description="Genome polyprotein">
    <location>
        <begin position="1"/>
        <end position="792" status="greater than"/>
    </location>
</feature>
<feature type="chain" id="PRO_0000037884" description="Capsid protein C" evidence="4">
    <location>
        <begin position="1"/>
        <end position="100"/>
    </location>
</feature>
<feature type="propeptide" id="PRO_0000037885" description="ER anchor for the capsid protein C, removed in mature form by serine protease NS3" evidence="4">
    <location>
        <begin position="101"/>
        <end position="114"/>
    </location>
</feature>
<feature type="chain" id="PRO_0000264649" description="Protein prM" evidence="4">
    <location>
        <begin position="115"/>
        <end position="280"/>
    </location>
</feature>
<feature type="chain" id="PRO_0000264650" description="Peptide pr" evidence="4">
    <location>
        <begin position="115"/>
        <end position="205"/>
    </location>
</feature>
<feature type="chain" id="PRO_0000037886" description="Small envelope protein M" evidence="4">
    <location>
        <begin position="206"/>
        <end position="280"/>
    </location>
</feature>
<feature type="chain" id="PRO_0000037887" description="Envelope protein E" evidence="4">
    <location>
        <begin position="281"/>
        <end position="775"/>
    </location>
</feature>
<feature type="chain" id="PRO_0000037888" description="Non-structural protein 1" evidence="4">
    <location>
        <begin position="776"/>
        <end position="792" status="greater than"/>
    </location>
</feature>
<feature type="topological domain" description="Cytoplasmic" evidence="6">
    <location>
        <begin position="1"/>
        <end position="101"/>
    </location>
</feature>
<feature type="transmembrane region" description="Helical" evidence="6">
    <location>
        <begin position="102"/>
        <end position="119"/>
    </location>
</feature>
<feature type="topological domain" description="Extracellular" evidence="6">
    <location>
        <begin position="120"/>
        <end position="242"/>
    </location>
</feature>
<feature type="transmembrane region" description="Helical" evidence="6">
    <location>
        <begin position="243"/>
        <end position="260"/>
    </location>
</feature>
<feature type="topological domain" description="Cytoplasmic" evidence="6">
    <location>
        <position position="261"/>
    </location>
</feature>
<feature type="transmembrane region" description="Helical" evidence="6">
    <location>
        <begin position="262"/>
        <end position="280"/>
    </location>
</feature>
<feature type="topological domain" description="Extracellular" evidence="6">
    <location>
        <begin position="281"/>
        <end position="725"/>
    </location>
</feature>
<feature type="transmembrane region" description="Helical" evidence="6">
    <location>
        <begin position="726"/>
        <end position="746"/>
    </location>
</feature>
<feature type="topological domain" description="Cytoplasmic" evidence="6">
    <location>
        <begin position="747"/>
        <end position="752"/>
    </location>
</feature>
<feature type="transmembrane region" description="Helical" evidence="6">
    <location>
        <begin position="753"/>
        <end position="775"/>
    </location>
</feature>
<feature type="topological domain" description="Extracellular" evidence="6">
    <location>
        <begin position="776"/>
        <end position="792" status="greater than"/>
    </location>
</feature>
<feature type="region of interest" description="Interaction with host EXOC1" evidence="3">
    <location>
        <begin position="1"/>
        <end position="15"/>
    </location>
</feature>
<feature type="region of interest" description="Hydrophobic; homodimerization of capsid protein C" evidence="4">
    <location>
        <begin position="37"/>
        <end position="72"/>
    </location>
</feature>
<feature type="region of interest" description="Fusion peptide" evidence="2">
    <location>
        <begin position="378"/>
        <end position="391"/>
    </location>
</feature>
<feature type="site" description="Cleavage; by viral protease NS3" evidence="4">
    <location>
        <begin position="100"/>
        <end position="101"/>
    </location>
</feature>
<feature type="site" description="Cleavage; by host signal peptidase" evidence="4">
    <location>
        <begin position="114"/>
        <end position="115"/>
    </location>
</feature>
<feature type="site" description="Cleavage; by host furin" evidence="4 6">
    <location>
        <begin position="205"/>
        <end position="206"/>
    </location>
</feature>
<feature type="site" description="Cleavage; by host signal peptidase" evidence="4">
    <location>
        <begin position="280"/>
        <end position="281"/>
    </location>
</feature>
<feature type="site" description="Cleavage; by host signal peptidase" evidence="4">
    <location>
        <begin position="775"/>
        <end position="776"/>
    </location>
</feature>
<feature type="glycosylation site" description="N-linked (GlcNAc...) asparagine; by host" evidence="6">
    <location>
        <position position="183"/>
    </location>
</feature>
<feature type="glycosylation site" description="N-linked (GlcNAc...) asparagine; by host" evidence="6">
    <location>
        <position position="347"/>
    </location>
</feature>
<feature type="glycosylation site" description="N-linked (GlcNAc...) asparagine; by host" evidence="6">
    <location>
        <position position="433"/>
    </location>
</feature>
<feature type="disulfide bond" evidence="3">
    <location>
        <begin position="283"/>
        <end position="310"/>
    </location>
</feature>
<feature type="disulfide bond" evidence="3">
    <location>
        <begin position="340"/>
        <end position="401"/>
    </location>
</feature>
<feature type="disulfide bond" evidence="3">
    <location>
        <begin position="354"/>
        <end position="385"/>
    </location>
</feature>
<feature type="disulfide bond" evidence="3">
    <location>
        <begin position="372"/>
        <end position="396"/>
    </location>
</feature>
<feature type="disulfide bond" evidence="3">
    <location>
        <begin position="465"/>
        <end position="565"/>
    </location>
</feature>
<feature type="disulfide bond" evidence="3">
    <location>
        <begin position="582"/>
        <end position="613"/>
    </location>
</feature>
<feature type="disulfide bond" evidence="3">
    <location>
        <begin position="779"/>
        <end position="790"/>
    </location>
</feature>
<feature type="non-terminal residue">
    <location>
        <position position="792"/>
    </location>
</feature>
<evidence type="ECO:0000250" key="1">
    <source>
        <dbReference type="UniProtKB" id="P03314"/>
    </source>
</evidence>
<evidence type="ECO:0000250" key="2">
    <source>
        <dbReference type="UniProtKB" id="P14336"/>
    </source>
</evidence>
<evidence type="ECO:0000250" key="3">
    <source>
        <dbReference type="UniProtKB" id="P17763"/>
    </source>
</evidence>
<evidence type="ECO:0000250" key="4">
    <source>
        <dbReference type="UniProtKB" id="P29990"/>
    </source>
</evidence>
<evidence type="ECO:0000250" key="5">
    <source>
        <dbReference type="UniProtKB" id="Q9Q6P4"/>
    </source>
</evidence>
<evidence type="ECO:0000255" key="6"/>
<organismHost>
    <name type="scientific">Aedes aegypti</name>
    <name type="common">Yellowfever mosquito</name>
    <name type="synonym">Culex aegypti</name>
    <dbReference type="NCBI Taxonomy" id="7159"/>
</organismHost>
<organismHost>
    <name type="scientific">Aedes albopictus</name>
    <name type="common">Asian tiger mosquito</name>
    <name type="synonym">Stegomyia albopicta</name>
    <dbReference type="NCBI Taxonomy" id="7160"/>
</organismHost>
<organismHost>
    <name type="scientific">Homo sapiens</name>
    <name type="common">Human</name>
    <dbReference type="NCBI Taxonomy" id="9606"/>
</organismHost>
<sequence>MNNQRKKTGNPSFNMLKRARNRVSTGSQLAKRFSKGLLSGQGPMKLVMAFVAFLRFLAIPPTAGILKRWGSFKKNGAINVLRGFRKEISNMLNIMNRRRRSVTMILMLLPTALAFHLTTRGGEPTLIVSKQERGKSLLFKTSAGVNMCTLIAMDLGELCEDTMTYKCPRMTEAEPDDVDCWCNATDTWVTYGTCSQTGEHRRDKRSVALDPHVGLGLETRTETWMSSEGAWKQIQKVETWALRHPGFTVIGLFLAHAIGTSITQKGIIFILLMLVTPSMAMRCVGIGNRDFVEGLSGATWVDVVLEHGSCVTTMAKNKPTLDIELLKTEVTNPAVLRKLCIEAKISNTTTDSRCPTQGEATLVEEQDTNFVCRRTFVDRGWGNGCGLFGKGSLITCAKFKCVTKLEGKIVQYENLKYSVIVTVHTGDQHQVGNETTEHGTIATITPQAPTSEIQLTDYGALTLDCSPRTGLDFNRVVLLTMKKKSWLVHKQWFLDLPLPWTSGASTSQETWNRQDLLVTFKTAHAKKQEVVVLGSQEGAMHTALTGATEIQTSGTTTIFAGHLKCRLKMDKLTLKGVSYVMCTGSFKLEKEVAETQHGTVLVQVKYEGTDAPCKIPFSSQDEKGVTQNGRLITANPIVIDKEKPVNIEAEPPFGESYIVVGAGEKALKLSWFKKGSSIGKMFEATARGARRMAILGDTAWDFGSIGGVFTSVGKLIHQIFGTAYGVLFSGVSWTMKIGIGILLTWLGLNSRSTSLSMTCIAVGMVTLYLGVMVQADSGCVINWKGKELKCGS</sequence>
<comment type="function">
    <molecule>Capsid protein C</molecule>
    <text evidence="3">Plays a role in virus budding by binding to the cell membrane and gathering the viral RNA into a nucleocapsid that forms the core of a mature virus particle. During virus entry, may induce genome penetration into the host cytoplasm after hemifusion induced by the surface proteins. Can migrate to the cell nucleus where it modulates host functions. Overcomes the anti-viral effects of host EXOC1 by sequestering and degrading the latter through the proteasome degradation pathway.</text>
</comment>
<comment type="function">
    <molecule>Capsid protein C</molecule>
    <text evidence="1">Inhibits RNA silencing by interfering with host Dicer.</text>
</comment>
<comment type="function">
    <molecule>Peptide pr</molecule>
    <text evidence="3">Prevents premature fusion activity of envelope proteins in trans-Golgi by binding to envelope protein E at pH6.0. After virion release in extracellular space, gets dissociated from E dimers.</text>
</comment>
<comment type="function">
    <molecule>Protein prM</molecule>
    <text evidence="3">Acts as a chaperone for envelope protein E during intracellular virion assembly by masking and inactivating envelope protein E fusion peptide. prM is the only viral peptide matured by host furin in the trans-Golgi network probably to avoid catastrophic activation of the viral fusion activity in acidic Golgi compartment prior to virion release. prM-E cleavage is inefficient, and many virions are only partially matured. These uncleaved prM would play a role in immune evasion.</text>
</comment>
<comment type="function">
    <molecule>Small envelope protein M</molecule>
    <text evidence="3">May play a role in virus budding. Exerts cytotoxic effects by activating a mitochondrial apoptotic pathway through M ectodomain. May display a viroporin activity.</text>
</comment>
<comment type="function">
    <molecule>Envelope protein E</molecule>
    <text evidence="3">Binds to host cell surface receptor and mediates fusion between viral and cellular membranes. Envelope protein is synthesized in the endoplasmic reticulum in the form of heterodimer with protein prM. They play a role in virion budding in the ER, and the newly formed immature particle is covered with 60 spikes composed of heterodimer between precursor prM and envelope protein E. The virion is transported to the Golgi apparatus where the low pH causes dissociation of PrM-E heterodimers and formation of E homodimers. prM-E cleavage is inefficient, and many virions are only partially matured. These uncleaved prM would play a role in immune evasion.</text>
</comment>
<comment type="function">
    <molecule>Non-structural protein 1</molecule>
    <text evidence="5">Involved in immune evasion, pathogenesis and viral replication. Once cleaved off the polyprotein, is targeted to three destinations: the viral replication cycle, the plasma membrane and the extracellular compartment. Essential for viral replication. Required for formation of the replication complex and recruitment of other non-structural proteins to the ER-derived membrane structures. Excreted as a hexameric lipoparticle that plays a role against host immune response. Antagonizing the complement function. Binds to the host macrophages and dendritic cells. Inhibits signal transduction originating from Toll-like receptor 3 (TLR3).</text>
</comment>
<comment type="function">
    <molecule>Non-structural protein 1</molecule>
    <text evidence="3">Disrupts the host endothelial glycocalyx layer of host pulmonary microvascular endothelial cells, inducing degradation of sialic acid and shedding of heparan sulfate proteoglycans. NS1 induces expression of sialidases, heparanase, and activates cathepsin L, which activates heparanase via enzymatic cleavage. These effects are probably linked to the endothelial hyperpermeability observed in severe dengue disease.</text>
</comment>
<comment type="subunit">
    <molecule>Capsid protein C</molecule>
    <text evidence="3">Homodimer. Interacts (via N-terminus) with host EXOC1 (via C-terminus); this interaction results in EXOC1 degradation through the proteasome degradation pathway.</text>
</comment>
<comment type="subunit">
    <molecule>Protein prM</molecule>
    <text evidence="3">Forms heterodimers with envelope protein E in the endoplasmic reticulum and Golgi.</text>
</comment>
<comment type="subunit">
    <molecule>Envelope protein E</molecule>
    <text evidence="3">Homodimer; in the endoplasmic reticulum and Golgi. Interacts with protein prM. Interacts with non-structural protein 1.</text>
</comment>
<comment type="subunit">
    <molecule>Non-structural protein 1</molecule>
    <text evidence="3">Homodimer; Homohexamer when secreted. Interacts with envelope protein E.</text>
</comment>
<comment type="subcellular location">
    <molecule>Capsid protein C</molecule>
    <subcellularLocation>
        <location evidence="3">Virion</location>
    </subcellularLocation>
    <subcellularLocation>
        <location evidence="3">Host nucleus</location>
    </subcellularLocation>
    <subcellularLocation>
        <location evidence="3">Host cytoplasm</location>
    </subcellularLocation>
    <subcellularLocation>
        <location evidence="3">Host cytoplasm</location>
        <location evidence="3">Host perinuclear region</location>
    </subcellularLocation>
</comment>
<comment type="subcellular location">
    <molecule>Peptide pr</molecule>
    <subcellularLocation>
        <location evidence="3">Secreted</location>
    </subcellularLocation>
</comment>
<comment type="subcellular location">
    <molecule>Small envelope protein M</molecule>
    <subcellularLocation>
        <location evidence="3">Virion membrane</location>
        <topology evidence="6">Multi-pass membrane protein</topology>
    </subcellularLocation>
    <subcellularLocation>
        <location evidence="3">Host endoplasmic reticulum membrane</location>
        <topology evidence="6">Multi-pass membrane protein</topology>
    </subcellularLocation>
</comment>
<comment type="subcellular location">
    <molecule>Envelope protein E</molecule>
    <subcellularLocation>
        <location evidence="3">Virion membrane</location>
        <topology evidence="6">Multi-pass membrane protein</topology>
    </subcellularLocation>
    <subcellularLocation>
        <location evidence="3">Host endoplasmic reticulum membrane</location>
        <topology evidence="6">Multi-pass membrane protein</topology>
    </subcellularLocation>
</comment>
<comment type="subcellular location">
    <molecule>Non-structural protein 1</molecule>
    <subcellularLocation>
        <location evidence="3">Secreted</location>
    </subcellularLocation>
    <subcellularLocation>
        <location>Host endoplasmic reticulum membrane</location>
        <topology>Peripheral membrane protein</topology>
        <orientation evidence="3">Lumenal side</orientation>
    </subcellularLocation>
    <text evidence="5">Located in RE-derived vesicles hosting the replication complex.</text>
</comment>
<comment type="domain">
    <text evidence="3">The transmembrane domains of the small envelope protein M and envelope protein E contain an endoplasmic reticulum retention signal.</text>
</comment>
<comment type="PTM">
    <molecule>Genome polyprotein</molecule>
    <text evidence="3">Specific enzymatic cleavages in vivo yield mature proteins. Cleavages in the lumen of endoplasmic reticulum are performed by host signal peptidase, wereas cleavages in the cytoplasmic side are performed by serine protease NS3. Signal cleavage at the 2K-4B site requires a prior NS3 protease-mediated cleavage at the 4A-2K site.</text>
</comment>
<comment type="PTM">
    <molecule>Envelope protein E</molecule>
    <text evidence="3">N-glycosylated.</text>
</comment>
<comment type="PTM">
    <molecule>Non-structural protein 1</molecule>
    <text evidence="3">N-glycosylated. The excreted form is glycosylated and this is required for efficient secretion of the protein from infected cells.</text>
</comment>
<reference key="1">
    <citation type="journal article" date="1989" name="J. Gen. Virol.">
        <title>Genetic relatedness among structural protein genes of dengue 1 virus strains.</title>
        <authorList>
            <person name="Chu M.C."/>
            <person name="O'Rourke E.J."/>
            <person name="Trent D.W."/>
        </authorList>
    </citation>
    <scope>NUCLEOTIDE SEQUENCE [GENOMIC RNA]</scope>
</reference>
<dbReference type="EMBL" id="D00502">
    <property type="protein sequence ID" value="BAA00394.1"/>
    <property type="molecule type" value="Genomic_RNA"/>
</dbReference>
<dbReference type="PIR" id="B32401">
    <property type="entry name" value="B32401"/>
</dbReference>
<dbReference type="SMR" id="P27912"/>
<dbReference type="ABCD" id="P27912">
    <property type="antibodies" value="1 sequenced antibody"/>
</dbReference>
<dbReference type="GO" id="GO:0005576">
    <property type="term" value="C:extracellular region"/>
    <property type="evidence" value="ECO:0007669"/>
    <property type="project" value="UniProtKB-SubCell"/>
</dbReference>
<dbReference type="GO" id="GO:0044167">
    <property type="term" value="C:host cell endoplasmic reticulum membrane"/>
    <property type="evidence" value="ECO:0007669"/>
    <property type="project" value="UniProtKB-SubCell"/>
</dbReference>
<dbReference type="GO" id="GO:0042025">
    <property type="term" value="C:host cell nucleus"/>
    <property type="evidence" value="ECO:0007669"/>
    <property type="project" value="UniProtKB-SubCell"/>
</dbReference>
<dbReference type="GO" id="GO:0044220">
    <property type="term" value="C:host cell perinuclear region of cytoplasm"/>
    <property type="evidence" value="ECO:0007669"/>
    <property type="project" value="UniProtKB-SubCell"/>
</dbReference>
<dbReference type="GO" id="GO:0016020">
    <property type="term" value="C:membrane"/>
    <property type="evidence" value="ECO:0007669"/>
    <property type="project" value="UniProtKB-KW"/>
</dbReference>
<dbReference type="GO" id="GO:0019031">
    <property type="term" value="C:viral envelope"/>
    <property type="evidence" value="ECO:0007669"/>
    <property type="project" value="UniProtKB-KW"/>
</dbReference>
<dbReference type="GO" id="GO:0019013">
    <property type="term" value="C:viral nucleocapsid"/>
    <property type="evidence" value="ECO:0007669"/>
    <property type="project" value="UniProtKB-KW"/>
</dbReference>
<dbReference type="GO" id="GO:0055036">
    <property type="term" value="C:virion membrane"/>
    <property type="evidence" value="ECO:0007669"/>
    <property type="project" value="UniProtKB-SubCell"/>
</dbReference>
<dbReference type="GO" id="GO:0046983">
    <property type="term" value="F:protein dimerization activity"/>
    <property type="evidence" value="ECO:0007669"/>
    <property type="project" value="InterPro"/>
</dbReference>
<dbReference type="GO" id="GO:0005198">
    <property type="term" value="F:structural molecule activity"/>
    <property type="evidence" value="ECO:0007669"/>
    <property type="project" value="InterPro"/>
</dbReference>
<dbReference type="GO" id="GO:0075512">
    <property type="term" value="P:clathrin-dependent endocytosis of virus by host cell"/>
    <property type="evidence" value="ECO:0007669"/>
    <property type="project" value="UniProtKB-KW"/>
</dbReference>
<dbReference type="GO" id="GO:0039654">
    <property type="term" value="P:fusion of virus membrane with host endosome membrane"/>
    <property type="evidence" value="ECO:0007669"/>
    <property type="project" value="UniProtKB-KW"/>
</dbReference>
<dbReference type="GO" id="GO:0052170">
    <property type="term" value="P:symbiont-mediated suppression of host innate immune response"/>
    <property type="evidence" value="ECO:0007669"/>
    <property type="project" value="UniProtKB-KW"/>
</dbReference>
<dbReference type="GO" id="GO:0019062">
    <property type="term" value="P:virion attachment to host cell"/>
    <property type="evidence" value="ECO:0007669"/>
    <property type="project" value="UniProtKB-KW"/>
</dbReference>
<dbReference type="CDD" id="cd12149">
    <property type="entry name" value="Flavi_E_C"/>
    <property type="match status" value="1"/>
</dbReference>
<dbReference type="CDD" id="cd17038">
    <property type="entry name" value="Flavi_M"/>
    <property type="match status" value="1"/>
</dbReference>
<dbReference type="FunFam" id="1.20.1280.260:FF:000001">
    <property type="entry name" value="Envelope glycoprotein"/>
    <property type="match status" value="1"/>
</dbReference>
<dbReference type="FunFam" id="2.60.40.350:FF:000001">
    <property type="entry name" value="Envelope glycoprotein"/>
    <property type="match status" value="1"/>
</dbReference>
<dbReference type="FunFam" id="1.10.10.930:FF:000001">
    <property type="entry name" value="Genome polyprotein"/>
    <property type="match status" value="1"/>
</dbReference>
<dbReference type="FunFam" id="2.60.260.50:FF:000001">
    <property type="entry name" value="Genome polyprotein"/>
    <property type="match status" value="1"/>
</dbReference>
<dbReference type="Gene3D" id="1.10.10.930">
    <property type="match status" value="1"/>
</dbReference>
<dbReference type="Gene3D" id="1.20.1280.260">
    <property type="match status" value="1"/>
</dbReference>
<dbReference type="Gene3D" id="2.60.40.350">
    <property type="match status" value="1"/>
</dbReference>
<dbReference type="Gene3D" id="1.10.8.970">
    <property type="entry name" value="Flavivirus envelope glycoprotein M-like"/>
    <property type="match status" value="1"/>
</dbReference>
<dbReference type="Gene3D" id="2.60.260.50">
    <property type="entry name" value="Flavivirus polyprotein propeptide domain"/>
    <property type="match status" value="1"/>
</dbReference>
<dbReference type="Gene3D" id="2.60.98.10">
    <property type="entry name" value="Tick-borne Encephalitis virus Glycoprotein, domain 1"/>
    <property type="match status" value="1"/>
</dbReference>
<dbReference type="Gene3D" id="3.30.67.10">
    <property type="entry name" value="Viral Envelope Glycoprotein, domain 2"/>
    <property type="match status" value="1"/>
</dbReference>
<dbReference type="Gene3D" id="3.30.387.10">
    <property type="entry name" value="Viral Envelope Glycoprotein, domain 3"/>
    <property type="match status" value="1"/>
</dbReference>
<dbReference type="InterPro" id="IPR000069">
    <property type="entry name" value="Env_glycoprot_M_flavivir"/>
</dbReference>
<dbReference type="InterPro" id="IPR038302">
    <property type="entry name" value="Env_glycoprot_M_sf_flavivir"/>
</dbReference>
<dbReference type="InterPro" id="IPR013755">
    <property type="entry name" value="Flav_gly_cen_dom_subdom1"/>
</dbReference>
<dbReference type="InterPro" id="IPR001122">
    <property type="entry name" value="Flavi_capsidC"/>
</dbReference>
<dbReference type="InterPro" id="IPR037172">
    <property type="entry name" value="Flavi_capsidC_sf"/>
</dbReference>
<dbReference type="InterPro" id="IPR027287">
    <property type="entry name" value="Flavi_E_Ig-like"/>
</dbReference>
<dbReference type="InterPro" id="IPR026470">
    <property type="entry name" value="Flavi_E_Stem/Anchor_dom"/>
</dbReference>
<dbReference type="InterPro" id="IPR038345">
    <property type="entry name" value="Flavi_E_Stem/Anchor_dom_sf"/>
</dbReference>
<dbReference type="InterPro" id="IPR011998">
    <property type="entry name" value="Flavi_Glycoprot_E_cen/dimer"/>
</dbReference>
<dbReference type="InterPro" id="IPR002535">
    <property type="entry name" value="Flavi_propep"/>
</dbReference>
<dbReference type="InterPro" id="IPR038688">
    <property type="entry name" value="Flavi_propep_sf"/>
</dbReference>
<dbReference type="InterPro" id="IPR000336">
    <property type="entry name" value="Flavivir/Alphavir_Ig-like_sf"/>
</dbReference>
<dbReference type="InterPro" id="IPR036253">
    <property type="entry name" value="Glycoprot_cen/dimer_sf"/>
</dbReference>
<dbReference type="InterPro" id="IPR038055">
    <property type="entry name" value="Glycoprot_E_dimer_dom"/>
</dbReference>
<dbReference type="InterPro" id="IPR013756">
    <property type="entry name" value="GlyE_cen_dom_subdom2"/>
</dbReference>
<dbReference type="InterPro" id="IPR014756">
    <property type="entry name" value="Ig_E-set"/>
</dbReference>
<dbReference type="NCBIfam" id="TIGR04240">
    <property type="entry name" value="flavi_E_stem"/>
    <property type="match status" value="1"/>
</dbReference>
<dbReference type="Pfam" id="PF01003">
    <property type="entry name" value="Flavi_capsid"/>
    <property type="match status" value="1"/>
</dbReference>
<dbReference type="Pfam" id="PF21659">
    <property type="entry name" value="Flavi_E_stem"/>
    <property type="match status" value="1"/>
</dbReference>
<dbReference type="Pfam" id="PF02832">
    <property type="entry name" value="Flavi_glycop_C"/>
    <property type="match status" value="1"/>
</dbReference>
<dbReference type="Pfam" id="PF00869">
    <property type="entry name" value="Flavi_glycoprot"/>
    <property type="match status" value="1"/>
</dbReference>
<dbReference type="Pfam" id="PF01004">
    <property type="entry name" value="Flavi_M"/>
    <property type="match status" value="1"/>
</dbReference>
<dbReference type="Pfam" id="PF01570">
    <property type="entry name" value="Flavi_propep"/>
    <property type="match status" value="1"/>
</dbReference>
<dbReference type="SUPFAM" id="SSF81296">
    <property type="entry name" value="E set domains"/>
    <property type="match status" value="1"/>
</dbReference>
<dbReference type="SUPFAM" id="SSF101257">
    <property type="entry name" value="Flavivirus capsid protein C"/>
    <property type="match status" value="1"/>
</dbReference>
<dbReference type="SUPFAM" id="SSF56983">
    <property type="entry name" value="Viral glycoprotein, central and dimerisation domains"/>
    <property type="match status" value="1"/>
</dbReference>
<proteinExistence type="inferred from homology"/>
<keyword id="KW-0167">Capsid protein</keyword>
<keyword id="KW-1165">Clathrin-mediated endocytosis of virus by host</keyword>
<keyword id="KW-0165">Cleavage on pair of basic residues</keyword>
<keyword id="KW-1015">Disulfide bond</keyword>
<keyword id="KW-1170">Fusion of virus membrane with host endosomal membrane</keyword>
<keyword id="KW-1168">Fusion of virus membrane with host membrane</keyword>
<keyword id="KW-0325">Glycoprotein</keyword>
<keyword id="KW-1035">Host cytoplasm</keyword>
<keyword id="KW-1038">Host endoplasmic reticulum</keyword>
<keyword id="KW-1043">Host membrane</keyword>
<keyword id="KW-1048">Host nucleus</keyword>
<keyword id="KW-0945">Host-virus interaction</keyword>
<keyword id="KW-1090">Inhibition of host innate immune response by virus</keyword>
<keyword id="KW-0472">Membrane</keyword>
<keyword id="KW-0964">Secreted</keyword>
<keyword id="KW-0941">Suppressor of RNA silencing</keyword>
<keyword id="KW-0812">Transmembrane</keyword>
<keyword id="KW-1133">Transmembrane helix</keyword>
<keyword id="KW-1161">Viral attachment to host cell</keyword>
<keyword id="KW-0261">Viral envelope protein</keyword>
<keyword id="KW-0899">Viral immunoevasion</keyword>
<keyword id="KW-0543">Viral nucleoprotein</keyword>
<keyword id="KW-1162">Viral penetration into host cytoplasm</keyword>
<keyword id="KW-0946">Virion</keyword>
<keyword id="KW-1164">Virus endocytosis by host</keyword>
<keyword id="KW-1160">Virus entry into host cell</keyword>
<keyword id="KW-0862">Zinc</keyword>
<name>POLG_DEN1A</name>
<accession>P27912</accession>
<organism>
    <name type="scientific">Dengue virus type 1 (strain Thailand/AHF 82-80/1980)</name>
    <name type="common">DENV-1</name>
    <dbReference type="NCBI Taxonomy" id="11057"/>
    <lineage>
        <taxon>Viruses</taxon>
        <taxon>Riboviria</taxon>
        <taxon>Orthornavirae</taxon>
        <taxon>Kitrinoviricota</taxon>
        <taxon>Flasuviricetes</taxon>
        <taxon>Amarillovirales</taxon>
        <taxon>Flaviviridae</taxon>
        <taxon>Orthoflavivirus</taxon>
        <taxon>Orthoflavivirus denguei</taxon>
        <taxon>Dengue virus</taxon>
    </lineage>
</organism>
<protein>
    <recommendedName>
        <fullName>Genome polyprotein</fullName>
    </recommendedName>
    <component>
        <recommendedName>
            <fullName>Capsid protein C</fullName>
        </recommendedName>
        <alternativeName>
            <fullName>Core protein</fullName>
        </alternativeName>
    </component>
    <component>
        <recommendedName>
            <fullName>Protein prM</fullName>
        </recommendedName>
    </component>
    <component>
        <recommendedName>
            <fullName>Peptide pr</fullName>
        </recommendedName>
    </component>
    <component>
        <recommendedName>
            <fullName>Small envelope protein M</fullName>
        </recommendedName>
        <alternativeName>
            <fullName>Matrix protein</fullName>
        </alternativeName>
    </component>
    <component>
        <recommendedName>
            <fullName>Envelope protein E</fullName>
        </recommendedName>
    </component>
    <component>
        <recommendedName>
            <fullName>Non-structural protein 1</fullName>
            <shortName>NS1</shortName>
        </recommendedName>
    </component>
</protein>